<keyword id="KW-0687">Ribonucleoprotein</keyword>
<keyword id="KW-0689">Ribosomal protein</keyword>
<keyword id="KW-0694">RNA-binding</keyword>
<keyword id="KW-0699">rRNA-binding</keyword>
<keyword id="KW-0820">tRNA-binding</keyword>
<proteinExistence type="inferred from homology"/>
<gene>
    <name evidence="1" type="primary">rpsG</name>
    <name type="ordered locus">gbs1813</name>
</gene>
<feature type="chain" id="PRO_0000124350" description="Small ribosomal subunit protein uS7">
    <location>
        <begin position="1"/>
        <end position="156"/>
    </location>
</feature>
<name>RS7_STRA3</name>
<protein>
    <recommendedName>
        <fullName evidence="1">Small ribosomal subunit protein uS7</fullName>
    </recommendedName>
    <alternativeName>
        <fullName evidence="2">30S ribosomal protein S7</fullName>
    </alternativeName>
</protein>
<organism>
    <name type="scientific">Streptococcus agalactiae serotype III (strain NEM316)</name>
    <dbReference type="NCBI Taxonomy" id="211110"/>
    <lineage>
        <taxon>Bacteria</taxon>
        <taxon>Bacillati</taxon>
        <taxon>Bacillota</taxon>
        <taxon>Bacilli</taxon>
        <taxon>Lactobacillales</taxon>
        <taxon>Streptococcaceae</taxon>
        <taxon>Streptococcus</taxon>
    </lineage>
</organism>
<sequence>MSRKNQAPKREVLPDPLYNSKIVTRLINRVMLDGKRGTAATIVYDAFEAIKEATGTDALEVFETAMENIMPVLEVRARRVGGSNYQVPVEVRPERRTTLGLRWLVNASRARGEHTMKDRLAKEIMDAANNTGASVKKREDTHKMAEANRAFAHFRW</sequence>
<comment type="function">
    <text evidence="1">One of the primary rRNA binding proteins, it binds directly to 16S rRNA where it nucleates assembly of the head domain of the 30S subunit. Is located at the subunit interface close to the decoding center, probably blocks exit of the E-site tRNA.</text>
</comment>
<comment type="subunit">
    <text evidence="1">Part of the 30S ribosomal subunit. Contacts proteins S9 and S11.</text>
</comment>
<comment type="similarity">
    <text evidence="1">Belongs to the universal ribosomal protein uS7 family.</text>
</comment>
<accession>Q8E3E6</accession>
<dbReference type="EMBL" id="AL766853">
    <property type="protein sequence ID" value="CAD47472.1"/>
    <property type="molecule type" value="Genomic_DNA"/>
</dbReference>
<dbReference type="RefSeq" id="WP_000087842.1">
    <property type="nucleotide sequence ID" value="NC_004368.1"/>
</dbReference>
<dbReference type="SMR" id="Q8E3E6"/>
<dbReference type="GeneID" id="66886608"/>
<dbReference type="KEGG" id="san:rpsG"/>
<dbReference type="eggNOG" id="COG0049">
    <property type="taxonomic scope" value="Bacteria"/>
</dbReference>
<dbReference type="HOGENOM" id="CLU_072226_1_1_9"/>
<dbReference type="Proteomes" id="UP000000823">
    <property type="component" value="Chromosome"/>
</dbReference>
<dbReference type="GO" id="GO:0015935">
    <property type="term" value="C:small ribosomal subunit"/>
    <property type="evidence" value="ECO:0007669"/>
    <property type="project" value="InterPro"/>
</dbReference>
<dbReference type="GO" id="GO:0019843">
    <property type="term" value="F:rRNA binding"/>
    <property type="evidence" value="ECO:0007669"/>
    <property type="project" value="UniProtKB-UniRule"/>
</dbReference>
<dbReference type="GO" id="GO:0003735">
    <property type="term" value="F:structural constituent of ribosome"/>
    <property type="evidence" value="ECO:0007669"/>
    <property type="project" value="InterPro"/>
</dbReference>
<dbReference type="GO" id="GO:0000049">
    <property type="term" value="F:tRNA binding"/>
    <property type="evidence" value="ECO:0007669"/>
    <property type="project" value="UniProtKB-UniRule"/>
</dbReference>
<dbReference type="GO" id="GO:0006412">
    <property type="term" value="P:translation"/>
    <property type="evidence" value="ECO:0007669"/>
    <property type="project" value="UniProtKB-UniRule"/>
</dbReference>
<dbReference type="CDD" id="cd14869">
    <property type="entry name" value="uS7_Bacteria"/>
    <property type="match status" value="1"/>
</dbReference>
<dbReference type="FunFam" id="1.10.455.10:FF:000001">
    <property type="entry name" value="30S ribosomal protein S7"/>
    <property type="match status" value="1"/>
</dbReference>
<dbReference type="Gene3D" id="1.10.455.10">
    <property type="entry name" value="Ribosomal protein S7 domain"/>
    <property type="match status" value="1"/>
</dbReference>
<dbReference type="HAMAP" id="MF_00480_B">
    <property type="entry name" value="Ribosomal_uS7_B"/>
    <property type="match status" value="1"/>
</dbReference>
<dbReference type="InterPro" id="IPR000235">
    <property type="entry name" value="Ribosomal_uS7"/>
</dbReference>
<dbReference type="InterPro" id="IPR005717">
    <property type="entry name" value="Ribosomal_uS7_bac/org-type"/>
</dbReference>
<dbReference type="InterPro" id="IPR020606">
    <property type="entry name" value="Ribosomal_uS7_CS"/>
</dbReference>
<dbReference type="InterPro" id="IPR023798">
    <property type="entry name" value="Ribosomal_uS7_dom"/>
</dbReference>
<dbReference type="InterPro" id="IPR036823">
    <property type="entry name" value="Ribosomal_uS7_dom_sf"/>
</dbReference>
<dbReference type="NCBIfam" id="TIGR01029">
    <property type="entry name" value="rpsG_bact"/>
    <property type="match status" value="1"/>
</dbReference>
<dbReference type="PANTHER" id="PTHR11205">
    <property type="entry name" value="RIBOSOMAL PROTEIN S7"/>
    <property type="match status" value="1"/>
</dbReference>
<dbReference type="Pfam" id="PF00177">
    <property type="entry name" value="Ribosomal_S7"/>
    <property type="match status" value="1"/>
</dbReference>
<dbReference type="PIRSF" id="PIRSF002122">
    <property type="entry name" value="RPS7p_RPS7a_RPS5e_RPS7o"/>
    <property type="match status" value="1"/>
</dbReference>
<dbReference type="SUPFAM" id="SSF47973">
    <property type="entry name" value="Ribosomal protein S7"/>
    <property type="match status" value="1"/>
</dbReference>
<dbReference type="PROSITE" id="PS00052">
    <property type="entry name" value="RIBOSOMAL_S7"/>
    <property type="match status" value="1"/>
</dbReference>
<reference key="1">
    <citation type="journal article" date="2002" name="Mol. Microbiol.">
        <title>Genome sequence of Streptococcus agalactiae, a pathogen causing invasive neonatal disease.</title>
        <authorList>
            <person name="Glaser P."/>
            <person name="Rusniok C."/>
            <person name="Buchrieser C."/>
            <person name="Chevalier F."/>
            <person name="Frangeul L."/>
            <person name="Msadek T."/>
            <person name="Zouine M."/>
            <person name="Couve E."/>
            <person name="Lalioui L."/>
            <person name="Poyart C."/>
            <person name="Trieu-Cuot P."/>
            <person name="Kunst F."/>
        </authorList>
    </citation>
    <scope>NUCLEOTIDE SEQUENCE [LARGE SCALE GENOMIC DNA]</scope>
    <source>
        <strain>NEM316</strain>
    </source>
</reference>
<evidence type="ECO:0000255" key="1">
    <source>
        <dbReference type="HAMAP-Rule" id="MF_00480"/>
    </source>
</evidence>
<evidence type="ECO:0000305" key="2"/>